<organism>
    <name type="scientific">Baumannia cicadellinicola subsp. Homalodisca coagulata</name>
    <dbReference type="NCBI Taxonomy" id="374463"/>
    <lineage>
        <taxon>Bacteria</taxon>
        <taxon>Pseudomonadati</taxon>
        <taxon>Pseudomonadota</taxon>
        <taxon>Gammaproteobacteria</taxon>
        <taxon>Candidatus Palibaumannia</taxon>
    </lineage>
</organism>
<name>CH60_BAUCH</name>
<reference key="1">
    <citation type="journal article" date="2006" name="PLoS Biol.">
        <title>Metabolic complementarity and genomics of the dual bacterial symbiosis of sharpshooters.</title>
        <authorList>
            <person name="Wu D."/>
            <person name="Daugherty S.C."/>
            <person name="Van Aken S.E."/>
            <person name="Pai G.H."/>
            <person name="Watkins K.L."/>
            <person name="Khouri H."/>
            <person name="Tallon L.J."/>
            <person name="Zaborsky J.M."/>
            <person name="Dunbar H.E."/>
            <person name="Tran P.L."/>
            <person name="Moran N.A."/>
            <person name="Eisen J.A."/>
        </authorList>
    </citation>
    <scope>NUCLEOTIDE SEQUENCE [LARGE SCALE GENOMIC DNA]</scope>
</reference>
<dbReference type="EC" id="5.6.1.7" evidence="1"/>
<dbReference type="EMBL" id="CP000238">
    <property type="protein sequence ID" value="ABF14170.1"/>
    <property type="molecule type" value="Genomic_DNA"/>
</dbReference>
<dbReference type="RefSeq" id="WP_011520752.1">
    <property type="nucleotide sequence ID" value="NC_007984.1"/>
</dbReference>
<dbReference type="SMR" id="Q1LSP5"/>
<dbReference type="STRING" id="374463.BCI_0591"/>
<dbReference type="KEGG" id="bci:BCI_0591"/>
<dbReference type="HOGENOM" id="CLU_016503_3_0_6"/>
<dbReference type="OrthoDB" id="9766614at2"/>
<dbReference type="Proteomes" id="UP000002427">
    <property type="component" value="Chromosome"/>
</dbReference>
<dbReference type="GO" id="GO:0005737">
    <property type="term" value="C:cytoplasm"/>
    <property type="evidence" value="ECO:0007669"/>
    <property type="project" value="UniProtKB-SubCell"/>
</dbReference>
<dbReference type="GO" id="GO:0005524">
    <property type="term" value="F:ATP binding"/>
    <property type="evidence" value="ECO:0007669"/>
    <property type="project" value="UniProtKB-UniRule"/>
</dbReference>
<dbReference type="GO" id="GO:0140662">
    <property type="term" value="F:ATP-dependent protein folding chaperone"/>
    <property type="evidence" value="ECO:0007669"/>
    <property type="project" value="InterPro"/>
</dbReference>
<dbReference type="GO" id="GO:0016853">
    <property type="term" value="F:isomerase activity"/>
    <property type="evidence" value="ECO:0007669"/>
    <property type="project" value="UniProtKB-KW"/>
</dbReference>
<dbReference type="GO" id="GO:0051082">
    <property type="term" value="F:unfolded protein binding"/>
    <property type="evidence" value="ECO:0007669"/>
    <property type="project" value="UniProtKB-UniRule"/>
</dbReference>
<dbReference type="GO" id="GO:0042026">
    <property type="term" value="P:protein refolding"/>
    <property type="evidence" value="ECO:0007669"/>
    <property type="project" value="UniProtKB-UniRule"/>
</dbReference>
<dbReference type="CDD" id="cd03344">
    <property type="entry name" value="GroEL"/>
    <property type="match status" value="1"/>
</dbReference>
<dbReference type="FunFam" id="1.10.560.10:FF:000001">
    <property type="entry name" value="60 kDa chaperonin"/>
    <property type="match status" value="1"/>
</dbReference>
<dbReference type="FunFam" id="3.50.7.10:FF:000001">
    <property type="entry name" value="60 kDa chaperonin"/>
    <property type="match status" value="1"/>
</dbReference>
<dbReference type="Gene3D" id="3.50.7.10">
    <property type="entry name" value="GroEL"/>
    <property type="match status" value="1"/>
</dbReference>
<dbReference type="Gene3D" id="1.10.560.10">
    <property type="entry name" value="GroEL-like equatorial domain"/>
    <property type="match status" value="1"/>
</dbReference>
<dbReference type="Gene3D" id="3.30.260.10">
    <property type="entry name" value="TCP-1-like chaperonin intermediate domain"/>
    <property type="match status" value="1"/>
</dbReference>
<dbReference type="HAMAP" id="MF_00600">
    <property type="entry name" value="CH60"/>
    <property type="match status" value="1"/>
</dbReference>
<dbReference type="InterPro" id="IPR018370">
    <property type="entry name" value="Chaperonin_Cpn60_CS"/>
</dbReference>
<dbReference type="InterPro" id="IPR001844">
    <property type="entry name" value="Cpn60/GroEL"/>
</dbReference>
<dbReference type="InterPro" id="IPR002423">
    <property type="entry name" value="Cpn60/GroEL/TCP-1"/>
</dbReference>
<dbReference type="InterPro" id="IPR027409">
    <property type="entry name" value="GroEL-like_apical_dom_sf"/>
</dbReference>
<dbReference type="InterPro" id="IPR027413">
    <property type="entry name" value="GROEL-like_equatorial_sf"/>
</dbReference>
<dbReference type="InterPro" id="IPR027410">
    <property type="entry name" value="TCP-1-like_intermed_sf"/>
</dbReference>
<dbReference type="NCBIfam" id="TIGR02348">
    <property type="entry name" value="GroEL"/>
    <property type="match status" value="1"/>
</dbReference>
<dbReference type="NCBIfam" id="NF000592">
    <property type="entry name" value="PRK00013.1"/>
    <property type="match status" value="1"/>
</dbReference>
<dbReference type="NCBIfam" id="NF009487">
    <property type="entry name" value="PRK12849.1"/>
    <property type="match status" value="1"/>
</dbReference>
<dbReference type="NCBIfam" id="NF009488">
    <property type="entry name" value="PRK12850.1"/>
    <property type="match status" value="1"/>
</dbReference>
<dbReference type="NCBIfam" id="NF009489">
    <property type="entry name" value="PRK12851.1"/>
    <property type="match status" value="1"/>
</dbReference>
<dbReference type="PANTHER" id="PTHR45633">
    <property type="entry name" value="60 KDA HEAT SHOCK PROTEIN, MITOCHONDRIAL"/>
    <property type="match status" value="1"/>
</dbReference>
<dbReference type="Pfam" id="PF00118">
    <property type="entry name" value="Cpn60_TCP1"/>
    <property type="match status" value="1"/>
</dbReference>
<dbReference type="PRINTS" id="PR00298">
    <property type="entry name" value="CHAPERONIN60"/>
</dbReference>
<dbReference type="SUPFAM" id="SSF52029">
    <property type="entry name" value="GroEL apical domain-like"/>
    <property type="match status" value="1"/>
</dbReference>
<dbReference type="SUPFAM" id="SSF48592">
    <property type="entry name" value="GroEL equatorial domain-like"/>
    <property type="match status" value="1"/>
</dbReference>
<dbReference type="SUPFAM" id="SSF54849">
    <property type="entry name" value="GroEL-intermediate domain like"/>
    <property type="match status" value="1"/>
</dbReference>
<dbReference type="PROSITE" id="PS00296">
    <property type="entry name" value="CHAPERONINS_CPN60"/>
    <property type="match status" value="1"/>
</dbReference>
<proteinExistence type="inferred from homology"/>
<comment type="function">
    <text evidence="1">Together with its co-chaperonin GroES, plays an essential role in assisting protein folding. The GroEL-GroES system forms a nano-cage that allows encapsulation of the non-native substrate proteins and provides a physical environment optimized to promote and accelerate protein folding.</text>
</comment>
<comment type="catalytic activity">
    <reaction evidence="1">
        <text>ATP + H2O + a folded polypeptide = ADP + phosphate + an unfolded polypeptide.</text>
        <dbReference type="EC" id="5.6.1.7"/>
    </reaction>
</comment>
<comment type="subunit">
    <text evidence="1">Forms a cylinder of 14 subunits composed of two heptameric rings stacked back-to-back. Interacts with the co-chaperonin GroES.</text>
</comment>
<comment type="subcellular location">
    <subcellularLocation>
        <location evidence="1">Cytoplasm</location>
    </subcellularLocation>
</comment>
<comment type="similarity">
    <text evidence="1">Belongs to the chaperonin (HSP60) family.</text>
</comment>
<accession>Q1LSP5</accession>
<evidence type="ECO:0000255" key="1">
    <source>
        <dbReference type="HAMAP-Rule" id="MF_00600"/>
    </source>
</evidence>
<evidence type="ECO:0000256" key="2">
    <source>
        <dbReference type="SAM" id="MobiDB-lite"/>
    </source>
</evidence>
<protein>
    <recommendedName>
        <fullName evidence="1">Chaperonin GroEL</fullName>
        <ecNumber evidence="1">5.6.1.7</ecNumber>
    </recommendedName>
    <alternativeName>
        <fullName evidence="1">60 kDa chaperonin</fullName>
    </alternativeName>
    <alternativeName>
        <fullName evidence="1">Chaperonin-60</fullName>
        <shortName evidence="1">Cpn60</shortName>
    </alternativeName>
</protein>
<feature type="chain" id="PRO_0000256875" description="Chaperonin GroEL">
    <location>
        <begin position="1"/>
        <end position="546"/>
    </location>
</feature>
<feature type="region of interest" description="Disordered" evidence="2">
    <location>
        <begin position="527"/>
        <end position="546"/>
    </location>
</feature>
<feature type="compositionally biased region" description="Gly residues" evidence="2">
    <location>
        <begin position="537"/>
        <end position="546"/>
    </location>
</feature>
<feature type="binding site" evidence="1">
    <location>
        <begin position="30"/>
        <end position="33"/>
    </location>
    <ligand>
        <name>ATP</name>
        <dbReference type="ChEBI" id="CHEBI:30616"/>
    </ligand>
</feature>
<feature type="binding site" evidence="1">
    <location>
        <position position="51"/>
    </location>
    <ligand>
        <name>ATP</name>
        <dbReference type="ChEBI" id="CHEBI:30616"/>
    </ligand>
</feature>
<feature type="binding site" evidence="1">
    <location>
        <begin position="87"/>
        <end position="91"/>
    </location>
    <ligand>
        <name>ATP</name>
        <dbReference type="ChEBI" id="CHEBI:30616"/>
    </ligand>
</feature>
<feature type="binding site" evidence="1">
    <location>
        <position position="415"/>
    </location>
    <ligand>
        <name>ATP</name>
        <dbReference type="ChEBI" id="CHEBI:30616"/>
    </ligand>
</feature>
<feature type="binding site" evidence="1">
    <location>
        <begin position="479"/>
        <end position="481"/>
    </location>
    <ligand>
        <name>ATP</name>
        <dbReference type="ChEBI" id="CHEBI:30616"/>
    </ligand>
</feature>
<feature type="binding site" evidence="1">
    <location>
        <position position="495"/>
    </location>
    <ligand>
        <name>ATP</name>
        <dbReference type="ChEBI" id="CHEBI:30616"/>
    </ligand>
</feature>
<sequence length="546" mass="57726">MAAKEVKFGNEARIKMLRGVNVLADAVKVTLGPRGRNVVLDKSFGAPVITKDGVSVAREIELEDKFENMGAQMVKEVASKANDAAGDGTTTATVLAQSIVNEGLKAVAAGMNPMDLKRGIDKAVIGAVEELKRLSVPCADSKAIAQVGTISANSDEKVGILIAEAMEKVGKKGVITVEEGSGLQDELDVVEGMQFDRGYLSPYFINKQENGTVELENPFILLADKKISNIREMLPILEAVAKSSKPLLVIAEDVEGEALATLVVNTMRGIVKVAAVKAPGFGDRRKAMLQDIATLTAGTVISEEIGLELEKATLEDMGQAKRVVITKDTTTIIDGVGDKAMIDSRVAQINQQREEATSDYDREKLQERVAKLAGGVAVIKVGAATEVEMKEKKARVEDALHSTRAAVEEGVVAGGGVALIRAANGIQQLCGDNEDQNVGIKVARRAMEAPLRQIVANAGEEPSVIANNVKAEDGNMGYNAATEKYGNMIDMGILDPTKVTRSALQYAASIAGLMITTECMITDLPKEEKPDVSASSGGMGGMGGMM</sequence>
<gene>
    <name evidence="1" type="primary">groEL</name>
    <name evidence="1" type="synonym">groL</name>
    <name type="ordered locus">BCI_0591</name>
</gene>
<keyword id="KW-0067">ATP-binding</keyword>
<keyword id="KW-0143">Chaperone</keyword>
<keyword id="KW-0963">Cytoplasm</keyword>
<keyword id="KW-0413">Isomerase</keyword>
<keyword id="KW-0547">Nucleotide-binding</keyword>
<keyword id="KW-1185">Reference proteome</keyword>